<accession>Q5QMM3</accession>
<accession>A0AAT6</accession>
<accession>B7EF33</accession>
<comment type="function">
    <text evidence="1">Transcription factor which may be involved in developmental processes.</text>
</comment>
<comment type="subcellular location">
    <subcellularLocation>
        <location evidence="2">Nucleus</location>
    </subcellularLocation>
</comment>
<comment type="similarity">
    <text evidence="4">Belongs to the WUS homeobox family.</text>
</comment>
<proteinExistence type="evidence at transcript level"/>
<name>WOX8_ORYSJ</name>
<gene>
    <name type="primary">WOX8</name>
    <name type="ordered locus">Os01g0818400</name>
    <name type="ordered locus">LOC_Os01g60270</name>
    <name evidence="5" type="ORF">OsJ_03880</name>
    <name type="ORF">P0454H12.31</name>
</gene>
<organism>
    <name type="scientific">Oryza sativa subsp. japonica</name>
    <name type="common">Rice</name>
    <dbReference type="NCBI Taxonomy" id="39947"/>
    <lineage>
        <taxon>Eukaryota</taxon>
        <taxon>Viridiplantae</taxon>
        <taxon>Streptophyta</taxon>
        <taxon>Embryophyta</taxon>
        <taxon>Tracheophyta</taxon>
        <taxon>Spermatophyta</taxon>
        <taxon>Magnoliopsida</taxon>
        <taxon>Liliopsida</taxon>
        <taxon>Poales</taxon>
        <taxon>Poaceae</taxon>
        <taxon>BOP clade</taxon>
        <taxon>Oryzoideae</taxon>
        <taxon>Oryzeae</taxon>
        <taxon>Oryzinae</taxon>
        <taxon>Oryza</taxon>
        <taxon>Oryza sativa</taxon>
    </lineage>
</organism>
<dbReference type="EMBL" id="AP003255">
    <property type="protein sequence ID" value="BAD73349.1"/>
    <property type="molecule type" value="Genomic_DNA"/>
</dbReference>
<dbReference type="EMBL" id="AP008207">
    <property type="protein sequence ID" value="BAF06545.1"/>
    <property type="molecule type" value="Genomic_DNA"/>
</dbReference>
<dbReference type="EMBL" id="AP014957">
    <property type="protein sequence ID" value="BAS74946.1"/>
    <property type="molecule type" value="Genomic_DNA"/>
</dbReference>
<dbReference type="EMBL" id="CM000138">
    <property type="protein sequence ID" value="EEE55584.1"/>
    <property type="molecule type" value="Genomic_DNA"/>
</dbReference>
<dbReference type="EMBL" id="AK068585">
    <property type="protein sequence ID" value="BAG90980.1"/>
    <property type="molecule type" value="mRNA"/>
</dbReference>
<dbReference type="EMBL" id="AM234755">
    <property type="protein sequence ID" value="CAJ84147.1"/>
    <property type="molecule type" value="mRNA"/>
</dbReference>
<dbReference type="RefSeq" id="XP_015626455.1">
    <property type="nucleotide sequence ID" value="XM_015770969.1"/>
</dbReference>
<dbReference type="SMR" id="Q5QMM3"/>
<dbReference type="FunCoup" id="Q5QMM3">
    <property type="interactions" value="733"/>
</dbReference>
<dbReference type="PaxDb" id="39947-Q5QMM3"/>
<dbReference type="EnsemblPlants" id="Os01t0818400-01">
    <property type="protein sequence ID" value="Os01t0818400-01"/>
    <property type="gene ID" value="Os01g0818400"/>
</dbReference>
<dbReference type="EnsemblPlants" id="Os01t0818400-02">
    <property type="protein sequence ID" value="Os01t0818400-02"/>
    <property type="gene ID" value="Os01g0818400"/>
</dbReference>
<dbReference type="EnsemblPlants" id="Os01t0818400-03">
    <property type="protein sequence ID" value="Os01t0818400-03"/>
    <property type="gene ID" value="Os01g0818400"/>
</dbReference>
<dbReference type="Gramene" id="Os01t0818400-01">
    <property type="protein sequence ID" value="Os01t0818400-01"/>
    <property type="gene ID" value="Os01g0818400"/>
</dbReference>
<dbReference type="Gramene" id="Os01t0818400-02">
    <property type="protein sequence ID" value="Os01t0818400-02"/>
    <property type="gene ID" value="Os01g0818400"/>
</dbReference>
<dbReference type="Gramene" id="Os01t0818400-03">
    <property type="protein sequence ID" value="Os01t0818400-03"/>
    <property type="gene ID" value="Os01g0818400"/>
</dbReference>
<dbReference type="KEGG" id="dosa:Os01g0818400"/>
<dbReference type="eggNOG" id="ENOG502QVBF">
    <property type="taxonomic scope" value="Eukaryota"/>
</dbReference>
<dbReference type="HOGENOM" id="CLU_071934_0_0_1"/>
<dbReference type="InParanoid" id="Q5QMM3"/>
<dbReference type="OMA" id="QMSFYGM"/>
<dbReference type="OrthoDB" id="6159439at2759"/>
<dbReference type="Proteomes" id="UP000000763">
    <property type="component" value="Chromosome 1"/>
</dbReference>
<dbReference type="Proteomes" id="UP000007752">
    <property type="component" value="Chromosome 1"/>
</dbReference>
<dbReference type="Proteomes" id="UP000059680">
    <property type="component" value="Chromosome 1"/>
</dbReference>
<dbReference type="GO" id="GO:0005634">
    <property type="term" value="C:nucleus"/>
    <property type="evidence" value="ECO:0007669"/>
    <property type="project" value="UniProtKB-SubCell"/>
</dbReference>
<dbReference type="GO" id="GO:0003677">
    <property type="term" value="F:DNA binding"/>
    <property type="evidence" value="ECO:0007669"/>
    <property type="project" value="UniProtKB-KW"/>
</dbReference>
<dbReference type="GO" id="GO:0003700">
    <property type="term" value="F:DNA-binding transcription factor activity"/>
    <property type="evidence" value="ECO:0007669"/>
    <property type="project" value="InterPro"/>
</dbReference>
<dbReference type="CDD" id="cd00086">
    <property type="entry name" value="homeodomain"/>
    <property type="match status" value="1"/>
</dbReference>
<dbReference type="Gene3D" id="1.10.10.60">
    <property type="entry name" value="Homeodomain-like"/>
    <property type="match status" value="1"/>
</dbReference>
<dbReference type="InterPro" id="IPR001356">
    <property type="entry name" value="HD"/>
</dbReference>
<dbReference type="InterPro" id="IPR009057">
    <property type="entry name" value="Homeodomain-like_sf"/>
</dbReference>
<dbReference type="InterPro" id="IPR044559">
    <property type="entry name" value="WOX13-like"/>
</dbReference>
<dbReference type="PANTHER" id="PTHR46777">
    <property type="entry name" value="WUSCHEL-RELATED HOMEOBOX 13"/>
    <property type="match status" value="1"/>
</dbReference>
<dbReference type="PANTHER" id="PTHR46777:SF5">
    <property type="entry name" value="WUSCHEL-RELATED HOMEOBOX 13"/>
    <property type="match status" value="1"/>
</dbReference>
<dbReference type="Pfam" id="PF00046">
    <property type="entry name" value="Homeodomain"/>
    <property type="match status" value="1"/>
</dbReference>
<dbReference type="SMART" id="SM00389">
    <property type="entry name" value="HOX"/>
    <property type="match status" value="1"/>
</dbReference>
<dbReference type="SUPFAM" id="SSF46689">
    <property type="entry name" value="Homeodomain-like"/>
    <property type="match status" value="1"/>
</dbReference>
<dbReference type="PROSITE" id="PS50071">
    <property type="entry name" value="HOMEOBOX_2"/>
    <property type="match status" value="1"/>
</dbReference>
<protein>
    <recommendedName>
        <fullName>WUSCHEL-related homeobox 8</fullName>
    </recommendedName>
    <alternativeName>
        <fullName>OsWOX8</fullName>
    </alternativeName>
    <alternativeName>
        <fullName>Protein WOX13</fullName>
    </alternativeName>
</protein>
<sequence length="267" mass="30239">MEWDKAKASSGEAVDDRGGGEGGLGYVKVMTDEQMEVLRKQISIYATICEQLVEMHRALTAQQDSIAGMRLGNLYCDPLMVPGGHKITARQRWTPTPMQLQILENIFDQGNGTPSKQKIKDITAELSQHGQISETNVYNWFQNRRARSKRKQAALPNNNAESEAEADEESPTDKKPKSDRPLHQNIAMRDHNSERISEMHHFDTEHEQIRRMMYASNDSSSRSSGSLGQMSFYDNVMSNPRIDHFLGKVESPGSFPHMRSGESFDMY</sequence>
<evidence type="ECO:0000250" key="1"/>
<evidence type="ECO:0000255" key="2">
    <source>
        <dbReference type="PROSITE-ProRule" id="PRU00108"/>
    </source>
</evidence>
<evidence type="ECO:0000256" key="3">
    <source>
        <dbReference type="SAM" id="MobiDB-lite"/>
    </source>
</evidence>
<evidence type="ECO:0000305" key="4"/>
<evidence type="ECO:0000312" key="5">
    <source>
        <dbReference type="EMBL" id="EEE55584.1"/>
    </source>
</evidence>
<keyword id="KW-0217">Developmental protein</keyword>
<keyword id="KW-0238">DNA-binding</keyword>
<keyword id="KW-0371">Homeobox</keyword>
<keyword id="KW-0539">Nucleus</keyword>
<keyword id="KW-1185">Reference proteome</keyword>
<keyword id="KW-0804">Transcription</keyword>
<keyword id="KW-0805">Transcription regulation</keyword>
<feature type="chain" id="PRO_0000308645" description="WUSCHEL-related homeobox 8">
    <location>
        <begin position="1"/>
        <end position="267"/>
    </location>
</feature>
<feature type="DNA-binding region" description="Homeobox; WUS-type" evidence="2">
    <location>
        <begin position="88"/>
        <end position="152"/>
    </location>
</feature>
<feature type="region of interest" description="Disordered" evidence="3">
    <location>
        <begin position="148"/>
        <end position="195"/>
    </location>
</feature>
<feature type="compositionally biased region" description="Basic and acidic residues" evidence="3">
    <location>
        <begin position="171"/>
        <end position="195"/>
    </location>
</feature>
<reference key="1">
    <citation type="journal article" date="2002" name="Nature">
        <title>The genome sequence and structure of rice chromosome 1.</title>
        <authorList>
            <person name="Sasaki T."/>
            <person name="Matsumoto T."/>
            <person name="Yamamoto K."/>
            <person name="Sakata K."/>
            <person name="Baba T."/>
            <person name="Katayose Y."/>
            <person name="Wu J."/>
            <person name="Niimura Y."/>
            <person name="Cheng Z."/>
            <person name="Nagamura Y."/>
            <person name="Antonio B.A."/>
            <person name="Kanamori H."/>
            <person name="Hosokawa S."/>
            <person name="Masukawa M."/>
            <person name="Arikawa K."/>
            <person name="Chiden Y."/>
            <person name="Hayashi M."/>
            <person name="Okamoto M."/>
            <person name="Ando T."/>
            <person name="Aoki H."/>
            <person name="Arita K."/>
            <person name="Hamada M."/>
            <person name="Harada C."/>
            <person name="Hijishita S."/>
            <person name="Honda M."/>
            <person name="Ichikawa Y."/>
            <person name="Idonuma A."/>
            <person name="Iijima M."/>
            <person name="Ikeda M."/>
            <person name="Ikeno M."/>
            <person name="Ito S."/>
            <person name="Ito T."/>
            <person name="Ito Y."/>
            <person name="Ito Y."/>
            <person name="Iwabuchi A."/>
            <person name="Kamiya K."/>
            <person name="Karasawa W."/>
            <person name="Katagiri S."/>
            <person name="Kikuta A."/>
            <person name="Kobayashi N."/>
            <person name="Kono I."/>
            <person name="Machita K."/>
            <person name="Maehara T."/>
            <person name="Mizuno H."/>
            <person name="Mizubayashi T."/>
            <person name="Mukai Y."/>
            <person name="Nagasaki H."/>
            <person name="Nakashima M."/>
            <person name="Nakama Y."/>
            <person name="Nakamichi Y."/>
            <person name="Nakamura M."/>
            <person name="Namiki N."/>
            <person name="Negishi M."/>
            <person name="Ohta I."/>
            <person name="Ono N."/>
            <person name="Saji S."/>
            <person name="Sakai K."/>
            <person name="Shibata M."/>
            <person name="Shimokawa T."/>
            <person name="Shomura A."/>
            <person name="Song J."/>
            <person name="Takazaki Y."/>
            <person name="Terasawa K."/>
            <person name="Tsuji K."/>
            <person name="Waki K."/>
            <person name="Yamagata H."/>
            <person name="Yamane H."/>
            <person name="Yoshiki S."/>
            <person name="Yoshihara R."/>
            <person name="Yukawa K."/>
            <person name="Zhong H."/>
            <person name="Iwama H."/>
            <person name="Endo T."/>
            <person name="Ito H."/>
            <person name="Hahn J.H."/>
            <person name="Kim H.-I."/>
            <person name="Eun M.-Y."/>
            <person name="Yano M."/>
            <person name="Jiang J."/>
            <person name="Gojobori T."/>
        </authorList>
    </citation>
    <scope>NUCLEOTIDE SEQUENCE [LARGE SCALE GENOMIC DNA]</scope>
    <source>
        <strain>cv. Nipponbare</strain>
    </source>
</reference>
<reference key="2">
    <citation type="journal article" date="2005" name="Nature">
        <title>The map-based sequence of the rice genome.</title>
        <authorList>
            <consortium name="International rice genome sequencing project (IRGSP)"/>
        </authorList>
    </citation>
    <scope>NUCLEOTIDE SEQUENCE [LARGE SCALE GENOMIC DNA]</scope>
    <source>
        <strain>cv. Nipponbare</strain>
    </source>
</reference>
<reference key="3">
    <citation type="journal article" date="2008" name="Nucleic Acids Res.">
        <title>The rice annotation project database (RAP-DB): 2008 update.</title>
        <authorList>
            <consortium name="The rice annotation project (RAP)"/>
        </authorList>
    </citation>
    <scope>GENOME REANNOTATION</scope>
    <source>
        <strain>cv. Nipponbare</strain>
    </source>
</reference>
<reference key="4">
    <citation type="journal article" date="2013" name="Rice">
        <title>Improvement of the Oryza sativa Nipponbare reference genome using next generation sequence and optical map data.</title>
        <authorList>
            <person name="Kawahara Y."/>
            <person name="de la Bastide M."/>
            <person name="Hamilton J.P."/>
            <person name="Kanamori H."/>
            <person name="McCombie W.R."/>
            <person name="Ouyang S."/>
            <person name="Schwartz D.C."/>
            <person name="Tanaka T."/>
            <person name="Wu J."/>
            <person name="Zhou S."/>
            <person name="Childs K.L."/>
            <person name="Davidson R.M."/>
            <person name="Lin H."/>
            <person name="Quesada-Ocampo L."/>
            <person name="Vaillancourt B."/>
            <person name="Sakai H."/>
            <person name="Lee S.S."/>
            <person name="Kim J."/>
            <person name="Numa H."/>
            <person name="Itoh T."/>
            <person name="Buell C.R."/>
            <person name="Matsumoto T."/>
        </authorList>
    </citation>
    <scope>GENOME REANNOTATION</scope>
    <source>
        <strain>cv. Nipponbare</strain>
    </source>
</reference>
<reference key="5">
    <citation type="journal article" date="2005" name="PLoS Biol.">
        <title>The genomes of Oryza sativa: a history of duplications.</title>
        <authorList>
            <person name="Yu J."/>
            <person name="Wang J."/>
            <person name="Lin W."/>
            <person name="Li S."/>
            <person name="Li H."/>
            <person name="Zhou J."/>
            <person name="Ni P."/>
            <person name="Dong W."/>
            <person name="Hu S."/>
            <person name="Zeng C."/>
            <person name="Zhang J."/>
            <person name="Zhang Y."/>
            <person name="Li R."/>
            <person name="Xu Z."/>
            <person name="Li S."/>
            <person name="Li X."/>
            <person name="Zheng H."/>
            <person name="Cong L."/>
            <person name="Lin L."/>
            <person name="Yin J."/>
            <person name="Geng J."/>
            <person name="Li G."/>
            <person name="Shi J."/>
            <person name="Liu J."/>
            <person name="Lv H."/>
            <person name="Li J."/>
            <person name="Wang J."/>
            <person name="Deng Y."/>
            <person name="Ran L."/>
            <person name="Shi X."/>
            <person name="Wang X."/>
            <person name="Wu Q."/>
            <person name="Li C."/>
            <person name="Ren X."/>
            <person name="Wang J."/>
            <person name="Wang X."/>
            <person name="Li D."/>
            <person name="Liu D."/>
            <person name="Zhang X."/>
            <person name="Ji Z."/>
            <person name="Zhao W."/>
            <person name="Sun Y."/>
            <person name="Zhang Z."/>
            <person name="Bao J."/>
            <person name="Han Y."/>
            <person name="Dong L."/>
            <person name="Ji J."/>
            <person name="Chen P."/>
            <person name="Wu S."/>
            <person name="Liu J."/>
            <person name="Xiao Y."/>
            <person name="Bu D."/>
            <person name="Tan J."/>
            <person name="Yang L."/>
            <person name="Ye C."/>
            <person name="Zhang J."/>
            <person name="Xu J."/>
            <person name="Zhou Y."/>
            <person name="Yu Y."/>
            <person name="Zhang B."/>
            <person name="Zhuang S."/>
            <person name="Wei H."/>
            <person name="Liu B."/>
            <person name="Lei M."/>
            <person name="Yu H."/>
            <person name="Li Y."/>
            <person name="Xu H."/>
            <person name="Wei S."/>
            <person name="He X."/>
            <person name="Fang L."/>
            <person name="Zhang Z."/>
            <person name="Zhang Y."/>
            <person name="Huang X."/>
            <person name="Su Z."/>
            <person name="Tong W."/>
            <person name="Li J."/>
            <person name="Tong Z."/>
            <person name="Li S."/>
            <person name="Ye J."/>
            <person name="Wang L."/>
            <person name="Fang L."/>
            <person name="Lei T."/>
            <person name="Chen C.-S."/>
            <person name="Chen H.-C."/>
            <person name="Xu Z."/>
            <person name="Li H."/>
            <person name="Huang H."/>
            <person name="Zhang F."/>
            <person name="Xu H."/>
            <person name="Li N."/>
            <person name="Zhao C."/>
            <person name="Li S."/>
            <person name="Dong L."/>
            <person name="Huang Y."/>
            <person name="Li L."/>
            <person name="Xi Y."/>
            <person name="Qi Q."/>
            <person name="Li W."/>
            <person name="Zhang B."/>
            <person name="Hu W."/>
            <person name="Zhang Y."/>
            <person name="Tian X."/>
            <person name="Jiao Y."/>
            <person name="Liang X."/>
            <person name="Jin J."/>
            <person name="Gao L."/>
            <person name="Zheng W."/>
            <person name="Hao B."/>
            <person name="Liu S.-M."/>
            <person name="Wang W."/>
            <person name="Yuan L."/>
            <person name="Cao M."/>
            <person name="McDermott J."/>
            <person name="Samudrala R."/>
            <person name="Wang J."/>
            <person name="Wong G.K.-S."/>
            <person name="Yang H."/>
        </authorList>
    </citation>
    <scope>NUCLEOTIDE SEQUENCE [LARGE SCALE GENOMIC DNA]</scope>
    <source>
        <strain>cv. Nipponbare</strain>
    </source>
</reference>
<reference key="6">
    <citation type="journal article" date="2003" name="Science">
        <title>Collection, mapping, and annotation of over 28,000 cDNA clones from japonica rice.</title>
        <authorList>
            <consortium name="The rice full-length cDNA consortium"/>
        </authorList>
    </citation>
    <scope>NUCLEOTIDE SEQUENCE [LARGE SCALE MRNA]</scope>
    <source>
        <strain>cv. Nipponbare</strain>
    </source>
</reference>
<reference key="7">
    <citation type="journal article" date="2006" name="Mol. Biol. Evol.">
        <title>The shoot stem cell niche in angiosperms: expression patterns of WUS orthologues in rice and maize imply major modifications in the course of mono- and dicot evolution.</title>
        <authorList>
            <person name="Nardmann J."/>
            <person name="Werr W."/>
        </authorList>
    </citation>
    <scope>NUCLEOTIDE SEQUENCE [MRNA] OF 88-152</scope>
</reference>
<reference key="8">
    <citation type="journal article" date="2007" name="Plant Physiol.">
        <title>A WUSCHEL-LIKE HOMEOBOX gene represses a YABBY gene expression required for rice leaf development.</title>
        <authorList>
            <person name="Dai M."/>
            <person name="Hu Y."/>
            <person name="Zhao Y."/>
            <person name="Liu H."/>
            <person name="Zhou D.-X."/>
        </authorList>
    </citation>
    <scope>NOMENCLATURE</scope>
</reference>